<dbReference type="EC" id="6.1.1.10" evidence="1"/>
<dbReference type="EMBL" id="AM933172">
    <property type="protein sequence ID" value="CAR33733.1"/>
    <property type="molecule type" value="Genomic_DNA"/>
</dbReference>
<dbReference type="RefSeq" id="WP_000195340.1">
    <property type="nucleotide sequence ID" value="NC_011294.1"/>
</dbReference>
<dbReference type="SMR" id="B5R0E7"/>
<dbReference type="KEGG" id="set:SEN2148"/>
<dbReference type="HOGENOM" id="CLU_009710_7_0_6"/>
<dbReference type="Proteomes" id="UP000000613">
    <property type="component" value="Chromosome"/>
</dbReference>
<dbReference type="GO" id="GO:0005829">
    <property type="term" value="C:cytosol"/>
    <property type="evidence" value="ECO:0007669"/>
    <property type="project" value="TreeGrafter"/>
</dbReference>
<dbReference type="GO" id="GO:0005524">
    <property type="term" value="F:ATP binding"/>
    <property type="evidence" value="ECO:0007669"/>
    <property type="project" value="UniProtKB-UniRule"/>
</dbReference>
<dbReference type="GO" id="GO:0046872">
    <property type="term" value="F:metal ion binding"/>
    <property type="evidence" value="ECO:0007669"/>
    <property type="project" value="UniProtKB-KW"/>
</dbReference>
<dbReference type="GO" id="GO:0004825">
    <property type="term" value="F:methionine-tRNA ligase activity"/>
    <property type="evidence" value="ECO:0007669"/>
    <property type="project" value="UniProtKB-UniRule"/>
</dbReference>
<dbReference type="GO" id="GO:0000049">
    <property type="term" value="F:tRNA binding"/>
    <property type="evidence" value="ECO:0007669"/>
    <property type="project" value="UniProtKB-KW"/>
</dbReference>
<dbReference type="GO" id="GO:0006431">
    <property type="term" value="P:methionyl-tRNA aminoacylation"/>
    <property type="evidence" value="ECO:0007669"/>
    <property type="project" value="UniProtKB-UniRule"/>
</dbReference>
<dbReference type="CDD" id="cd07957">
    <property type="entry name" value="Anticodon_Ia_Met"/>
    <property type="match status" value="1"/>
</dbReference>
<dbReference type="CDD" id="cd00814">
    <property type="entry name" value="MetRS_core"/>
    <property type="match status" value="1"/>
</dbReference>
<dbReference type="CDD" id="cd02800">
    <property type="entry name" value="tRNA_bind_EcMetRS_like"/>
    <property type="match status" value="1"/>
</dbReference>
<dbReference type="FunFam" id="1.10.730.10:FF:000005">
    <property type="entry name" value="Methionine--tRNA ligase"/>
    <property type="match status" value="1"/>
</dbReference>
<dbReference type="FunFam" id="2.20.28.20:FF:000001">
    <property type="entry name" value="Methionine--tRNA ligase"/>
    <property type="match status" value="1"/>
</dbReference>
<dbReference type="FunFam" id="2.40.50.140:FF:000042">
    <property type="entry name" value="Methionine--tRNA ligase"/>
    <property type="match status" value="1"/>
</dbReference>
<dbReference type="Gene3D" id="3.40.50.620">
    <property type="entry name" value="HUPs"/>
    <property type="match status" value="1"/>
</dbReference>
<dbReference type="Gene3D" id="1.10.730.10">
    <property type="entry name" value="Isoleucyl-tRNA Synthetase, Domain 1"/>
    <property type="match status" value="1"/>
</dbReference>
<dbReference type="Gene3D" id="2.20.28.20">
    <property type="entry name" value="Methionyl-tRNA synthetase, Zn-domain"/>
    <property type="match status" value="1"/>
</dbReference>
<dbReference type="Gene3D" id="2.40.50.140">
    <property type="entry name" value="Nucleic acid-binding proteins"/>
    <property type="match status" value="1"/>
</dbReference>
<dbReference type="HAMAP" id="MF_00098">
    <property type="entry name" value="Met_tRNA_synth_type1"/>
    <property type="match status" value="1"/>
</dbReference>
<dbReference type="InterPro" id="IPR001412">
    <property type="entry name" value="aa-tRNA-synth_I_CS"/>
</dbReference>
<dbReference type="InterPro" id="IPR041872">
    <property type="entry name" value="Anticodon_Met"/>
</dbReference>
<dbReference type="InterPro" id="IPR004495">
    <property type="entry name" value="Met-tRNA-synth_bsu_C"/>
</dbReference>
<dbReference type="InterPro" id="IPR023458">
    <property type="entry name" value="Met-tRNA_ligase_1"/>
</dbReference>
<dbReference type="InterPro" id="IPR014758">
    <property type="entry name" value="Met-tRNA_synth"/>
</dbReference>
<dbReference type="InterPro" id="IPR015413">
    <property type="entry name" value="Methionyl/Leucyl_tRNA_Synth"/>
</dbReference>
<dbReference type="InterPro" id="IPR033911">
    <property type="entry name" value="MetRS_core"/>
</dbReference>
<dbReference type="InterPro" id="IPR029038">
    <property type="entry name" value="MetRS_Zn"/>
</dbReference>
<dbReference type="InterPro" id="IPR012340">
    <property type="entry name" value="NA-bd_OB-fold"/>
</dbReference>
<dbReference type="InterPro" id="IPR014729">
    <property type="entry name" value="Rossmann-like_a/b/a_fold"/>
</dbReference>
<dbReference type="InterPro" id="IPR002547">
    <property type="entry name" value="tRNA-bd_dom"/>
</dbReference>
<dbReference type="InterPro" id="IPR009080">
    <property type="entry name" value="tRNAsynth_Ia_anticodon-bd"/>
</dbReference>
<dbReference type="NCBIfam" id="TIGR00398">
    <property type="entry name" value="metG"/>
    <property type="match status" value="1"/>
</dbReference>
<dbReference type="NCBIfam" id="TIGR00399">
    <property type="entry name" value="metG_C_term"/>
    <property type="match status" value="1"/>
</dbReference>
<dbReference type="NCBIfam" id="NF001100">
    <property type="entry name" value="PRK00133.1"/>
    <property type="match status" value="1"/>
</dbReference>
<dbReference type="PANTHER" id="PTHR45765">
    <property type="entry name" value="METHIONINE--TRNA LIGASE"/>
    <property type="match status" value="1"/>
</dbReference>
<dbReference type="PANTHER" id="PTHR45765:SF1">
    <property type="entry name" value="METHIONINE--TRNA LIGASE, CYTOPLASMIC"/>
    <property type="match status" value="1"/>
</dbReference>
<dbReference type="Pfam" id="PF19303">
    <property type="entry name" value="Anticodon_3"/>
    <property type="match status" value="1"/>
</dbReference>
<dbReference type="Pfam" id="PF09334">
    <property type="entry name" value="tRNA-synt_1g"/>
    <property type="match status" value="1"/>
</dbReference>
<dbReference type="Pfam" id="PF01588">
    <property type="entry name" value="tRNA_bind"/>
    <property type="match status" value="1"/>
</dbReference>
<dbReference type="PRINTS" id="PR01041">
    <property type="entry name" value="TRNASYNTHMET"/>
</dbReference>
<dbReference type="SUPFAM" id="SSF47323">
    <property type="entry name" value="Anticodon-binding domain of a subclass of class I aminoacyl-tRNA synthetases"/>
    <property type="match status" value="1"/>
</dbReference>
<dbReference type="SUPFAM" id="SSF57770">
    <property type="entry name" value="Methionyl-tRNA synthetase (MetRS), Zn-domain"/>
    <property type="match status" value="1"/>
</dbReference>
<dbReference type="SUPFAM" id="SSF50249">
    <property type="entry name" value="Nucleic acid-binding proteins"/>
    <property type="match status" value="1"/>
</dbReference>
<dbReference type="SUPFAM" id="SSF52374">
    <property type="entry name" value="Nucleotidylyl transferase"/>
    <property type="match status" value="1"/>
</dbReference>
<dbReference type="PROSITE" id="PS00178">
    <property type="entry name" value="AA_TRNA_LIGASE_I"/>
    <property type="match status" value="1"/>
</dbReference>
<dbReference type="PROSITE" id="PS50886">
    <property type="entry name" value="TRBD"/>
    <property type="match status" value="1"/>
</dbReference>
<comment type="function">
    <text evidence="1">Is required not only for elongation of protein synthesis but also for the initiation of all mRNA translation through initiator tRNA(fMet) aminoacylation.</text>
</comment>
<comment type="catalytic activity">
    <reaction evidence="1">
        <text>tRNA(Met) + L-methionine + ATP = L-methionyl-tRNA(Met) + AMP + diphosphate</text>
        <dbReference type="Rhea" id="RHEA:13481"/>
        <dbReference type="Rhea" id="RHEA-COMP:9667"/>
        <dbReference type="Rhea" id="RHEA-COMP:9698"/>
        <dbReference type="ChEBI" id="CHEBI:30616"/>
        <dbReference type="ChEBI" id="CHEBI:33019"/>
        <dbReference type="ChEBI" id="CHEBI:57844"/>
        <dbReference type="ChEBI" id="CHEBI:78442"/>
        <dbReference type="ChEBI" id="CHEBI:78530"/>
        <dbReference type="ChEBI" id="CHEBI:456215"/>
        <dbReference type="EC" id="6.1.1.10"/>
    </reaction>
</comment>
<comment type="cofactor">
    <cofactor evidence="1">
        <name>Zn(2+)</name>
        <dbReference type="ChEBI" id="CHEBI:29105"/>
    </cofactor>
    <text evidence="1">Binds 1 zinc ion per subunit.</text>
</comment>
<comment type="subunit">
    <text evidence="1">Homodimer.</text>
</comment>
<comment type="subcellular location">
    <subcellularLocation>
        <location evidence="1">Cytoplasm</location>
    </subcellularLocation>
</comment>
<comment type="similarity">
    <text evidence="1">Belongs to the class-I aminoacyl-tRNA synthetase family. MetG type 1 subfamily.</text>
</comment>
<accession>B5R0E7</accession>
<protein>
    <recommendedName>
        <fullName evidence="1">Methionine--tRNA ligase</fullName>
        <ecNumber evidence="1">6.1.1.10</ecNumber>
    </recommendedName>
    <alternativeName>
        <fullName evidence="1">Methionyl-tRNA synthetase</fullName>
        <shortName evidence="1">MetRS</shortName>
    </alternativeName>
</protein>
<feature type="chain" id="PRO_1000093727" description="Methionine--tRNA ligase">
    <location>
        <begin position="1"/>
        <end position="677"/>
    </location>
</feature>
<feature type="domain" description="tRNA-binding" evidence="1">
    <location>
        <begin position="575"/>
        <end position="677"/>
    </location>
</feature>
<feature type="short sequence motif" description="'HIGH' region">
    <location>
        <begin position="15"/>
        <end position="25"/>
    </location>
</feature>
<feature type="short sequence motif" description="'KMSKS' region">
    <location>
        <begin position="333"/>
        <end position="337"/>
    </location>
</feature>
<feature type="binding site" evidence="1">
    <location>
        <position position="146"/>
    </location>
    <ligand>
        <name>Zn(2+)</name>
        <dbReference type="ChEBI" id="CHEBI:29105"/>
    </ligand>
</feature>
<feature type="binding site" evidence="1">
    <location>
        <position position="149"/>
    </location>
    <ligand>
        <name>Zn(2+)</name>
        <dbReference type="ChEBI" id="CHEBI:29105"/>
    </ligand>
</feature>
<feature type="binding site" evidence="1">
    <location>
        <position position="159"/>
    </location>
    <ligand>
        <name>Zn(2+)</name>
        <dbReference type="ChEBI" id="CHEBI:29105"/>
    </ligand>
</feature>
<feature type="binding site" evidence="1">
    <location>
        <position position="162"/>
    </location>
    <ligand>
        <name>Zn(2+)</name>
        <dbReference type="ChEBI" id="CHEBI:29105"/>
    </ligand>
</feature>
<feature type="binding site" evidence="1">
    <location>
        <position position="336"/>
    </location>
    <ligand>
        <name>ATP</name>
        <dbReference type="ChEBI" id="CHEBI:30616"/>
    </ligand>
</feature>
<name>SYM_SALEP</name>
<reference key="1">
    <citation type="journal article" date="2008" name="Genome Res.">
        <title>Comparative genome analysis of Salmonella enteritidis PT4 and Salmonella gallinarum 287/91 provides insights into evolutionary and host adaptation pathways.</title>
        <authorList>
            <person name="Thomson N.R."/>
            <person name="Clayton D.J."/>
            <person name="Windhorst D."/>
            <person name="Vernikos G."/>
            <person name="Davidson S."/>
            <person name="Churcher C."/>
            <person name="Quail M.A."/>
            <person name="Stevens M."/>
            <person name="Jones M.A."/>
            <person name="Watson M."/>
            <person name="Barron A."/>
            <person name="Layton A."/>
            <person name="Pickard D."/>
            <person name="Kingsley R.A."/>
            <person name="Bignell A."/>
            <person name="Clark L."/>
            <person name="Harris B."/>
            <person name="Ormond D."/>
            <person name="Abdellah Z."/>
            <person name="Brooks K."/>
            <person name="Cherevach I."/>
            <person name="Chillingworth T."/>
            <person name="Woodward J."/>
            <person name="Norberczak H."/>
            <person name="Lord A."/>
            <person name="Arrowsmith C."/>
            <person name="Jagels K."/>
            <person name="Moule S."/>
            <person name="Mungall K."/>
            <person name="Saunders M."/>
            <person name="Whitehead S."/>
            <person name="Chabalgoity J.A."/>
            <person name="Maskell D."/>
            <person name="Humphreys T."/>
            <person name="Roberts M."/>
            <person name="Barrow P.A."/>
            <person name="Dougan G."/>
            <person name="Parkhill J."/>
        </authorList>
    </citation>
    <scope>NUCLEOTIDE SEQUENCE [LARGE SCALE GENOMIC DNA]</scope>
    <source>
        <strain>P125109</strain>
    </source>
</reference>
<evidence type="ECO:0000255" key="1">
    <source>
        <dbReference type="HAMAP-Rule" id="MF_00098"/>
    </source>
</evidence>
<gene>
    <name evidence="1" type="primary">metG</name>
    <name type="ordered locus">SEN2148</name>
</gene>
<keyword id="KW-0030">Aminoacyl-tRNA synthetase</keyword>
<keyword id="KW-0067">ATP-binding</keyword>
<keyword id="KW-0963">Cytoplasm</keyword>
<keyword id="KW-0436">Ligase</keyword>
<keyword id="KW-0479">Metal-binding</keyword>
<keyword id="KW-0547">Nucleotide-binding</keyword>
<keyword id="KW-0648">Protein biosynthesis</keyword>
<keyword id="KW-0694">RNA-binding</keyword>
<keyword id="KW-0820">tRNA-binding</keyword>
<keyword id="KW-0862">Zinc</keyword>
<organism>
    <name type="scientific">Salmonella enteritidis PT4 (strain P125109)</name>
    <dbReference type="NCBI Taxonomy" id="550537"/>
    <lineage>
        <taxon>Bacteria</taxon>
        <taxon>Pseudomonadati</taxon>
        <taxon>Pseudomonadota</taxon>
        <taxon>Gammaproteobacteria</taxon>
        <taxon>Enterobacterales</taxon>
        <taxon>Enterobacteriaceae</taxon>
        <taxon>Salmonella</taxon>
    </lineage>
</organism>
<proteinExistence type="inferred from homology"/>
<sequence>MTQVAKKILVTCALPYANGSIHLGHMLEHIQADVWVRYQRMRGHEVNFICADDAHGTPIMLKAQQLGITPEQMIGEMSQEHQTDFAGFNISYDNYHSTHSDENRELSELIYTRLKENGFIKNRTISQLYDPEKGMFLPDRFVKGTCPKCKSADQYGDNCEVCGATYSPTELIEPKSVVSGATPVMRDSEHFFFDLPSFSEMLQAWTRSGALQEQVANKMQEWFESGLQQWDISRDAPYFGFEIPNAPGKYFYVWLDAPIGYMGSFKNLCDKRGDTTSFDEYWKKDSDAELYHFIGKDIVYFHSLFWPAMLEGSHFRKPTNLFVHGYVTVNGAKMSKSRGTFIKASTWLKHFDADSLRYYYTAKLSSRIDDIDLNLEDFVQRVNADIVNKVVNLASRNAGFINKRFDGVLAAELADPQLYKTFTDAAAVIGEAWESREFGKAIREIMALADVANRYVDEQAPWVVAKQEGRDADLQAICSMGINLFRVLMTYLKPVLPTLSERVEAFLNSELNWDAIEQPLLSHKVNTFKALYNRIDMKQVEALVEASKEEVKAAAAPVTGPLADFPIQETITFDDFAKIDLRVALIENAEFVEGSDKLLRLTLDLGGEKRNVFSGIRSAYPDPQALIGRQTVMVANLAPRKMRFGVSEGMVMAAGPGGKDIFLLSPDDGAKPGQQVK</sequence>